<accession>Q8BFV3</accession>
<reference key="1">
    <citation type="journal article" date="2005" name="Science">
        <title>The transcriptional landscape of the mammalian genome.</title>
        <authorList>
            <person name="Carninci P."/>
            <person name="Kasukawa T."/>
            <person name="Katayama S."/>
            <person name="Gough J."/>
            <person name="Frith M.C."/>
            <person name="Maeda N."/>
            <person name="Oyama R."/>
            <person name="Ravasi T."/>
            <person name="Lenhard B."/>
            <person name="Wells C."/>
            <person name="Kodzius R."/>
            <person name="Shimokawa K."/>
            <person name="Bajic V.B."/>
            <person name="Brenner S.E."/>
            <person name="Batalov S."/>
            <person name="Forrest A.R."/>
            <person name="Zavolan M."/>
            <person name="Davis M.J."/>
            <person name="Wilming L.G."/>
            <person name="Aidinis V."/>
            <person name="Allen J.E."/>
            <person name="Ambesi-Impiombato A."/>
            <person name="Apweiler R."/>
            <person name="Aturaliya R.N."/>
            <person name="Bailey T.L."/>
            <person name="Bansal M."/>
            <person name="Baxter L."/>
            <person name="Beisel K.W."/>
            <person name="Bersano T."/>
            <person name="Bono H."/>
            <person name="Chalk A.M."/>
            <person name="Chiu K.P."/>
            <person name="Choudhary V."/>
            <person name="Christoffels A."/>
            <person name="Clutterbuck D.R."/>
            <person name="Crowe M.L."/>
            <person name="Dalla E."/>
            <person name="Dalrymple B.P."/>
            <person name="de Bono B."/>
            <person name="Della Gatta G."/>
            <person name="di Bernardo D."/>
            <person name="Down T."/>
            <person name="Engstrom P."/>
            <person name="Fagiolini M."/>
            <person name="Faulkner G."/>
            <person name="Fletcher C.F."/>
            <person name="Fukushima T."/>
            <person name="Furuno M."/>
            <person name="Futaki S."/>
            <person name="Gariboldi M."/>
            <person name="Georgii-Hemming P."/>
            <person name="Gingeras T.R."/>
            <person name="Gojobori T."/>
            <person name="Green R.E."/>
            <person name="Gustincich S."/>
            <person name="Harbers M."/>
            <person name="Hayashi Y."/>
            <person name="Hensch T.K."/>
            <person name="Hirokawa N."/>
            <person name="Hill D."/>
            <person name="Huminiecki L."/>
            <person name="Iacono M."/>
            <person name="Ikeo K."/>
            <person name="Iwama A."/>
            <person name="Ishikawa T."/>
            <person name="Jakt M."/>
            <person name="Kanapin A."/>
            <person name="Katoh M."/>
            <person name="Kawasawa Y."/>
            <person name="Kelso J."/>
            <person name="Kitamura H."/>
            <person name="Kitano H."/>
            <person name="Kollias G."/>
            <person name="Krishnan S.P."/>
            <person name="Kruger A."/>
            <person name="Kummerfeld S.K."/>
            <person name="Kurochkin I.V."/>
            <person name="Lareau L.F."/>
            <person name="Lazarevic D."/>
            <person name="Lipovich L."/>
            <person name="Liu J."/>
            <person name="Liuni S."/>
            <person name="McWilliam S."/>
            <person name="Madan Babu M."/>
            <person name="Madera M."/>
            <person name="Marchionni L."/>
            <person name="Matsuda H."/>
            <person name="Matsuzawa S."/>
            <person name="Miki H."/>
            <person name="Mignone F."/>
            <person name="Miyake S."/>
            <person name="Morris K."/>
            <person name="Mottagui-Tabar S."/>
            <person name="Mulder N."/>
            <person name="Nakano N."/>
            <person name="Nakauchi H."/>
            <person name="Ng P."/>
            <person name="Nilsson R."/>
            <person name="Nishiguchi S."/>
            <person name="Nishikawa S."/>
            <person name="Nori F."/>
            <person name="Ohara O."/>
            <person name="Okazaki Y."/>
            <person name="Orlando V."/>
            <person name="Pang K.C."/>
            <person name="Pavan W.J."/>
            <person name="Pavesi G."/>
            <person name="Pesole G."/>
            <person name="Petrovsky N."/>
            <person name="Piazza S."/>
            <person name="Reed J."/>
            <person name="Reid J.F."/>
            <person name="Ring B.Z."/>
            <person name="Ringwald M."/>
            <person name="Rost B."/>
            <person name="Ruan Y."/>
            <person name="Salzberg S.L."/>
            <person name="Sandelin A."/>
            <person name="Schneider C."/>
            <person name="Schoenbach C."/>
            <person name="Sekiguchi K."/>
            <person name="Semple C.A."/>
            <person name="Seno S."/>
            <person name="Sessa L."/>
            <person name="Sheng Y."/>
            <person name="Shibata Y."/>
            <person name="Shimada H."/>
            <person name="Shimada K."/>
            <person name="Silva D."/>
            <person name="Sinclair B."/>
            <person name="Sperling S."/>
            <person name="Stupka E."/>
            <person name="Sugiura K."/>
            <person name="Sultana R."/>
            <person name="Takenaka Y."/>
            <person name="Taki K."/>
            <person name="Tammoja K."/>
            <person name="Tan S.L."/>
            <person name="Tang S."/>
            <person name="Taylor M.S."/>
            <person name="Tegner J."/>
            <person name="Teichmann S.A."/>
            <person name="Ueda H.R."/>
            <person name="van Nimwegen E."/>
            <person name="Verardo R."/>
            <person name="Wei C.L."/>
            <person name="Yagi K."/>
            <person name="Yamanishi H."/>
            <person name="Zabarovsky E."/>
            <person name="Zhu S."/>
            <person name="Zimmer A."/>
            <person name="Hide W."/>
            <person name="Bult C."/>
            <person name="Grimmond S.M."/>
            <person name="Teasdale R.D."/>
            <person name="Liu E.T."/>
            <person name="Brusic V."/>
            <person name="Quackenbush J."/>
            <person name="Wahlestedt C."/>
            <person name="Mattick J.S."/>
            <person name="Hume D.A."/>
            <person name="Kai C."/>
            <person name="Sasaki D."/>
            <person name="Tomaru Y."/>
            <person name="Fukuda S."/>
            <person name="Kanamori-Katayama M."/>
            <person name="Suzuki M."/>
            <person name="Aoki J."/>
            <person name="Arakawa T."/>
            <person name="Iida J."/>
            <person name="Imamura K."/>
            <person name="Itoh M."/>
            <person name="Kato T."/>
            <person name="Kawaji H."/>
            <person name="Kawagashira N."/>
            <person name="Kawashima T."/>
            <person name="Kojima M."/>
            <person name="Kondo S."/>
            <person name="Konno H."/>
            <person name="Nakano K."/>
            <person name="Ninomiya N."/>
            <person name="Nishio T."/>
            <person name="Okada M."/>
            <person name="Plessy C."/>
            <person name="Shibata K."/>
            <person name="Shiraki T."/>
            <person name="Suzuki S."/>
            <person name="Tagami M."/>
            <person name="Waki K."/>
            <person name="Watahiki A."/>
            <person name="Okamura-Oho Y."/>
            <person name="Suzuki H."/>
            <person name="Kawai J."/>
            <person name="Hayashizaki Y."/>
        </authorList>
    </citation>
    <scope>NUCLEOTIDE SEQUENCE [LARGE SCALE MRNA]</scope>
    <source>
        <strain>C57BL/6J</strain>
        <tissue>Adipose tissue</tissue>
        <tissue>Eye</tissue>
    </source>
</reference>
<dbReference type="EC" id="3.1.3.16" evidence="1"/>
<dbReference type="EC" id="3.1.3.48" evidence="1"/>
<dbReference type="EMBL" id="AK053746">
    <property type="protein sequence ID" value="BAC35504.1"/>
    <property type="molecule type" value="mRNA"/>
</dbReference>
<dbReference type="EMBL" id="AK080964">
    <property type="protein sequence ID" value="BAC38097.1"/>
    <property type="molecule type" value="mRNA"/>
</dbReference>
<dbReference type="CCDS" id="CCDS22241.1"/>
<dbReference type="RefSeq" id="NP_795907.1">
    <property type="nucleotide sequence ID" value="NM_176933.5"/>
</dbReference>
<dbReference type="SMR" id="Q8BFV3"/>
<dbReference type="BioGRID" id="235330">
    <property type="interactions" value="2"/>
</dbReference>
<dbReference type="CORUM" id="Q8BFV3"/>
<dbReference type="FunCoup" id="Q8BFV3">
    <property type="interactions" value="2127"/>
</dbReference>
<dbReference type="IntAct" id="Q8BFV3">
    <property type="interactions" value="1"/>
</dbReference>
<dbReference type="MINT" id="Q8BFV3"/>
<dbReference type="STRING" id="10090.ENSMUSP00000033930"/>
<dbReference type="GlyGen" id="Q8BFV3">
    <property type="glycosylation" value="1 site"/>
</dbReference>
<dbReference type="iPTMnet" id="Q8BFV3"/>
<dbReference type="PhosphoSitePlus" id="Q8BFV3"/>
<dbReference type="PaxDb" id="10090-ENSMUSP00000033930"/>
<dbReference type="ProteomicsDB" id="277640"/>
<dbReference type="Antibodypedia" id="10497">
    <property type="antibodies" value="432 antibodies from 33 providers"/>
</dbReference>
<dbReference type="DNASU" id="319520"/>
<dbReference type="Ensembl" id="ENSMUST00000033930.5">
    <property type="protein sequence ID" value="ENSMUSP00000033930.5"/>
    <property type="gene ID" value="ENSMUSG00000031530.7"/>
</dbReference>
<dbReference type="GeneID" id="319520"/>
<dbReference type="KEGG" id="mmu:319520"/>
<dbReference type="UCSC" id="uc009lks.1">
    <property type="organism name" value="mouse"/>
</dbReference>
<dbReference type="AGR" id="MGI:2442191"/>
<dbReference type="CTD" id="1846"/>
<dbReference type="MGI" id="MGI:2442191">
    <property type="gene designation" value="Dusp4"/>
</dbReference>
<dbReference type="VEuPathDB" id="HostDB:ENSMUSG00000031530"/>
<dbReference type="eggNOG" id="KOG1716">
    <property type="taxonomic scope" value="Eukaryota"/>
</dbReference>
<dbReference type="GeneTree" id="ENSGT00940000159066"/>
<dbReference type="HOGENOM" id="CLU_027074_0_2_1"/>
<dbReference type="InParanoid" id="Q8BFV3"/>
<dbReference type="OMA" id="ELGEMDC"/>
<dbReference type="OrthoDB" id="165342at2759"/>
<dbReference type="PhylomeDB" id="Q8BFV3"/>
<dbReference type="TreeFam" id="TF105122"/>
<dbReference type="Reactome" id="R-MMU-112409">
    <property type="pathway name" value="RAF-independent MAPK1/3 activation"/>
</dbReference>
<dbReference type="Reactome" id="R-MMU-202670">
    <property type="pathway name" value="ERKs are inactivated"/>
</dbReference>
<dbReference type="Reactome" id="R-MMU-5675221">
    <property type="pathway name" value="Negative regulation of MAPK pathway"/>
</dbReference>
<dbReference type="BioGRID-ORCS" id="319520">
    <property type="hits" value="9 hits in 80 CRISPR screens"/>
</dbReference>
<dbReference type="ChiTaRS" id="Dusp4">
    <property type="organism name" value="mouse"/>
</dbReference>
<dbReference type="PRO" id="PR:Q8BFV3"/>
<dbReference type="Proteomes" id="UP000000589">
    <property type="component" value="Chromosome 8"/>
</dbReference>
<dbReference type="RNAct" id="Q8BFV3">
    <property type="molecule type" value="protein"/>
</dbReference>
<dbReference type="Bgee" id="ENSMUSG00000031530">
    <property type="expression patterns" value="Expressed in ganglionic eminence and 76 other cell types or tissues"/>
</dbReference>
<dbReference type="GO" id="GO:0005654">
    <property type="term" value="C:nucleoplasm"/>
    <property type="evidence" value="ECO:0007669"/>
    <property type="project" value="Ensembl"/>
</dbReference>
<dbReference type="GO" id="GO:0005634">
    <property type="term" value="C:nucleus"/>
    <property type="evidence" value="ECO:0000250"/>
    <property type="project" value="UniProtKB"/>
</dbReference>
<dbReference type="GO" id="GO:1990439">
    <property type="term" value="F:MAP kinase serine/threonine phosphatase activity"/>
    <property type="evidence" value="ECO:0000250"/>
    <property type="project" value="UniProtKB"/>
</dbReference>
<dbReference type="GO" id="GO:0017017">
    <property type="term" value="F:MAP kinase tyrosine/serine/threonine phosphatase activity"/>
    <property type="evidence" value="ECO:0007669"/>
    <property type="project" value="InterPro"/>
</dbReference>
<dbReference type="GO" id="GO:0016791">
    <property type="term" value="F:phosphatase activity"/>
    <property type="evidence" value="ECO:0000250"/>
    <property type="project" value="UniProtKB"/>
</dbReference>
<dbReference type="GO" id="GO:0004725">
    <property type="term" value="F:protein tyrosine phosphatase activity"/>
    <property type="evidence" value="ECO:0000250"/>
    <property type="project" value="UniProtKB"/>
</dbReference>
<dbReference type="GO" id="GO:0008330">
    <property type="term" value="F:protein tyrosine/threonine phosphatase activity"/>
    <property type="evidence" value="ECO:0000250"/>
    <property type="project" value="UniProtKB"/>
</dbReference>
<dbReference type="GO" id="GO:0016311">
    <property type="term" value="P:dephosphorylation"/>
    <property type="evidence" value="ECO:0000250"/>
    <property type="project" value="UniProtKB"/>
</dbReference>
<dbReference type="GO" id="GO:0070373">
    <property type="term" value="P:negative regulation of ERK1 and ERK2 cascade"/>
    <property type="evidence" value="ECO:0000250"/>
    <property type="project" value="UniProtKB"/>
</dbReference>
<dbReference type="CDD" id="cd14640">
    <property type="entry name" value="DSP_DUSP4"/>
    <property type="match status" value="1"/>
</dbReference>
<dbReference type="CDD" id="cd01446">
    <property type="entry name" value="DSP_MapKP"/>
    <property type="match status" value="1"/>
</dbReference>
<dbReference type="FunFam" id="3.40.250.10:FF:000027">
    <property type="entry name" value="Dual specificity phosphatase 4"/>
    <property type="match status" value="1"/>
</dbReference>
<dbReference type="FunFam" id="3.90.190.10:FF:000015">
    <property type="entry name" value="Dual specificity phosphatase 4"/>
    <property type="match status" value="1"/>
</dbReference>
<dbReference type="Gene3D" id="3.90.190.10">
    <property type="entry name" value="Protein tyrosine phosphatase superfamily"/>
    <property type="match status" value="1"/>
</dbReference>
<dbReference type="Gene3D" id="3.40.250.10">
    <property type="entry name" value="Rhodanese-like domain"/>
    <property type="match status" value="1"/>
</dbReference>
<dbReference type="InterPro" id="IPR000340">
    <property type="entry name" value="Dual-sp_phosphatase_cat-dom"/>
</dbReference>
<dbReference type="InterPro" id="IPR008343">
    <property type="entry name" value="MKP"/>
</dbReference>
<dbReference type="InterPro" id="IPR029021">
    <property type="entry name" value="Prot-tyrosine_phosphatase-like"/>
</dbReference>
<dbReference type="InterPro" id="IPR001763">
    <property type="entry name" value="Rhodanese-like_dom"/>
</dbReference>
<dbReference type="InterPro" id="IPR036873">
    <property type="entry name" value="Rhodanese-like_dom_sf"/>
</dbReference>
<dbReference type="InterPro" id="IPR016130">
    <property type="entry name" value="Tyr_Pase_AS"/>
</dbReference>
<dbReference type="InterPro" id="IPR003595">
    <property type="entry name" value="Tyr_Pase_cat"/>
</dbReference>
<dbReference type="InterPro" id="IPR000387">
    <property type="entry name" value="Tyr_Pase_dom"/>
</dbReference>
<dbReference type="InterPro" id="IPR020422">
    <property type="entry name" value="TYR_PHOSPHATASE_DUAL_dom"/>
</dbReference>
<dbReference type="PANTHER" id="PTHR10159">
    <property type="entry name" value="DUAL SPECIFICITY PROTEIN PHOSPHATASE"/>
    <property type="match status" value="1"/>
</dbReference>
<dbReference type="PANTHER" id="PTHR10159:SF111">
    <property type="entry name" value="DUAL SPECIFICITY PROTEIN PHOSPHATASE 4"/>
    <property type="match status" value="1"/>
</dbReference>
<dbReference type="Pfam" id="PF00782">
    <property type="entry name" value="DSPc"/>
    <property type="match status" value="1"/>
</dbReference>
<dbReference type="Pfam" id="PF00581">
    <property type="entry name" value="Rhodanese"/>
    <property type="match status" value="1"/>
</dbReference>
<dbReference type="PIRSF" id="PIRSF000939">
    <property type="entry name" value="MAPK_Ptase"/>
    <property type="match status" value="1"/>
</dbReference>
<dbReference type="PRINTS" id="PR01764">
    <property type="entry name" value="MAPKPHPHTASE"/>
</dbReference>
<dbReference type="SMART" id="SM00195">
    <property type="entry name" value="DSPc"/>
    <property type="match status" value="1"/>
</dbReference>
<dbReference type="SMART" id="SM00404">
    <property type="entry name" value="PTPc_motif"/>
    <property type="match status" value="1"/>
</dbReference>
<dbReference type="SMART" id="SM00450">
    <property type="entry name" value="RHOD"/>
    <property type="match status" value="1"/>
</dbReference>
<dbReference type="SUPFAM" id="SSF52799">
    <property type="entry name" value="(Phosphotyrosine protein) phosphatases II"/>
    <property type="match status" value="1"/>
</dbReference>
<dbReference type="SUPFAM" id="SSF52821">
    <property type="entry name" value="Rhodanese/Cell cycle control phosphatase"/>
    <property type="match status" value="1"/>
</dbReference>
<dbReference type="PROSITE" id="PS50206">
    <property type="entry name" value="RHODANESE_3"/>
    <property type="match status" value="1"/>
</dbReference>
<dbReference type="PROSITE" id="PS00383">
    <property type="entry name" value="TYR_PHOSPHATASE_1"/>
    <property type="match status" value="1"/>
</dbReference>
<dbReference type="PROSITE" id="PS50056">
    <property type="entry name" value="TYR_PHOSPHATASE_2"/>
    <property type="match status" value="1"/>
</dbReference>
<dbReference type="PROSITE" id="PS50054">
    <property type="entry name" value="TYR_PHOSPHATASE_DUAL"/>
    <property type="match status" value="1"/>
</dbReference>
<keyword id="KW-0007">Acetylation</keyword>
<keyword id="KW-0378">Hydrolase</keyword>
<keyword id="KW-0539">Nucleus</keyword>
<keyword id="KW-0597">Phosphoprotein</keyword>
<keyword id="KW-0904">Protein phosphatase</keyword>
<keyword id="KW-1185">Reference proteome</keyword>
<gene>
    <name type="primary">Dusp4</name>
</gene>
<comment type="function">
    <text evidence="1">Regulates mitogenic signal transduction by dephosphorylating both Thr and Tyr residues on MAP kinases ERK1 and ERK2.</text>
</comment>
<comment type="catalytic activity">
    <reaction evidence="4">
        <text>O-phospho-L-tyrosyl-[protein] + H2O = L-tyrosyl-[protein] + phosphate</text>
        <dbReference type="Rhea" id="RHEA:10684"/>
        <dbReference type="Rhea" id="RHEA-COMP:10136"/>
        <dbReference type="Rhea" id="RHEA-COMP:20101"/>
        <dbReference type="ChEBI" id="CHEBI:15377"/>
        <dbReference type="ChEBI" id="CHEBI:43474"/>
        <dbReference type="ChEBI" id="CHEBI:46858"/>
        <dbReference type="ChEBI" id="CHEBI:61978"/>
        <dbReference type="EC" id="3.1.3.48"/>
    </reaction>
</comment>
<comment type="catalytic activity">
    <reaction evidence="1">
        <text>O-phospho-L-seryl-[protein] + H2O = L-seryl-[protein] + phosphate</text>
        <dbReference type="Rhea" id="RHEA:20629"/>
        <dbReference type="Rhea" id="RHEA-COMP:9863"/>
        <dbReference type="Rhea" id="RHEA-COMP:11604"/>
        <dbReference type="ChEBI" id="CHEBI:15377"/>
        <dbReference type="ChEBI" id="CHEBI:29999"/>
        <dbReference type="ChEBI" id="CHEBI:43474"/>
        <dbReference type="ChEBI" id="CHEBI:83421"/>
        <dbReference type="EC" id="3.1.3.16"/>
    </reaction>
</comment>
<comment type="catalytic activity">
    <reaction evidence="1">
        <text>O-phospho-L-threonyl-[protein] + H2O = L-threonyl-[protein] + phosphate</text>
        <dbReference type="Rhea" id="RHEA:47004"/>
        <dbReference type="Rhea" id="RHEA-COMP:11060"/>
        <dbReference type="Rhea" id="RHEA-COMP:11605"/>
        <dbReference type="ChEBI" id="CHEBI:15377"/>
        <dbReference type="ChEBI" id="CHEBI:30013"/>
        <dbReference type="ChEBI" id="CHEBI:43474"/>
        <dbReference type="ChEBI" id="CHEBI:61977"/>
        <dbReference type="EC" id="3.1.3.16"/>
    </reaction>
</comment>
<comment type="subunit">
    <text evidence="1">Hollow spherical complex composed of 24 subunits with pseudooctahedral symmetry, has a tetramer as the basic unit.</text>
</comment>
<comment type="subcellular location">
    <subcellularLocation>
        <location evidence="1">Nucleus</location>
    </subcellularLocation>
</comment>
<comment type="PTM">
    <text evidence="1">Phosphorylation in the C-terminus by ERK1/2 inhibits proteasomal degradation and stabilizes the protein.</text>
</comment>
<comment type="similarity">
    <text evidence="5">Belongs to the protein-tyrosine phosphatase family. Non-receptor class dual specificity subfamily.</text>
</comment>
<organism>
    <name type="scientific">Mus musculus</name>
    <name type="common">Mouse</name>
    <dbReference type="NCBI Taxonomy" id="10090"/>
    <lineage>
        <taxon>Eukaryota</taxon>
        <taxon>Metazoa</taxon>
        <taxon>Chordata</taxon>
        <taxon>Craniata</taxon>
        <taxon>Vertebrata</taxon>
        <taxon>Euteleostomi</taxon>
        <taxon>Mammalia</taxon>
        <taxon>Eutheria</taxon>
        <taxon>Euarchontoglires</taxon>
        <taxon>Glires</taxon>
        <taxon>Rodentia</taxon>
        <taxon>Myomorpha</taxon>
        <taxon>Muroidea</taxon>
        <taxon>Muridae</taxon>
        <taxon>Murinae</taxon>
        <taxon>Mus</taxon>
        <taxon>Mus</taxon>
    </lineage>
</organism>
<sequence length="398" mass="43372">MVTMEELREMDCSVLKRLMNRDENGGGGSAGGNGSGSHGALGLLSGGKCLLLDCRPFLAHSAGYIRGSVNVRCNTIVRRRAKGSVSLEQILPAEEEVRARLRSGLYSAVIVYDERSPRAESLREDSTVSLVVQALRRNAERTDICLLKGGYERFSSEYPEFCSKTKALAAIPPPVPPSTNESLDLGCSSCGTPLHDQGGPVEILPFLYLGSAYHAARRDMLDALGITALLNVSSDCPNHFEGHYQYKCIPVEDNHKADISSWFMEAIEYIDAVKDCRGRVLVHCQAGISRSATICLAYLMMKKRVRLEEAFEFVKQRRSIISPNFSFMGQLLQFESQVLTTSCAAEAASPSGPLRERGKATPTPTSQFVFSFPVSVGVHAAPSNLPYLHSPITTSPSC</sequence>
<name>DUS4_MOUSE</name>
<proteinExistence type="evidence at transcript level"/>
<feature type="initiator methionine" description="Removed" evidence="1">
    <location>
        <position position="1"/>
    </location>
</feature>
<feature type="chain" id="PRO_0000094799" description="Dual specificity protein phosphatase 4">
    <location>
        <begin position="2"/>
        <end position="398"/>
    </location>
</feature>
<feature type="domain" description="Rhodanese" evidence="3">
    <location>
        <begin position="45"/>
        <end position="163"/>
    </location>
</feature>
<feature type="domain" description="Tyrosine-protein phosphatase" evidence="2">
    <location>
        <begin position="199"/>
        <end position="340"/>
    </location>
</feature>
<feature type="active site" description="Phosphocysteine intermediate" evidence="2">
    <location>
        <position position="284"/>
    </location>
</feature>
<feature type="modified residue" description="N-acetylvaline" evidence="1">
    <location>
        <position position="2"/>
    </location>
</feature>
<feature type="modified residue" description="Phosphoserine; by MAPK" evidence="1">
    <location>
        <position position="390"/>
    </location>
</feature>
<feature type="modified residue" description="Phosphoserine; by MAPK" evidence="1">
    <location>
        <position position="395"/>
    </location>
</feature>
<protein>
    <recommendedName>
        <fullName>Dual specificity protein phosphatase 4</fullName>
        <ecNumber evidence="1">3.1.3.16</ecNumber>
        <ecNumber evidence="1">3.1.3.48</ecNumber>
    </recommendedName>
</protein>
<evidence type="ECO:0000250" key="1">
    <source>
        <dbReference type="UniProtKB" id="Q13115"/>
    </source>
</evidence>
<evidence type="ECO:0000255" key="2">
    <source>
        <dbReference type="PROSITE-ProRule" id="PRU00160"/>
    </source>
</evidence>
<evidence type="ECO:0000255" key="3">
    <source>
        <dbReference type="PROSITE-ProRule" id="PRU00173"/>
    </source>
</evidence>
<evidence type="ECO:0000255" key="4">
    <source>
        <dbReference type="PROSITE-ProRule" id="PRU10044"/>
    </source>
</evidence>
<evidence type="ECO:0000305" key="5"/>